<proteinExistence type="inferred from homology"/>
<accession>B7MC45</accession>
<name>AROE_ECO45</name>
<reference key="1">
    <citation type="journal article" date="2009" name="PLoS Genet.">
        <title>Organised genome dynamics in the Escherichia coli species results in highly diverse adaptive paths.</title>
        <authorList>
            <person name="Touchon M."/>
            <person name="Hoede C."/>
            <person name="Tenaillon O."/>
            <person name="Barbe V."/>
            <person name="Baeriswyl S."/>
            <person name="Bidet P."/>
            <person name="Bingen E."/>
            <person name="Bonacorsi S."/>
            <person name="Bouchier C."/>
            <person name="Bouvet O."/>
            <person name="Calteau A."/>
            <person name="Chiapello H."/>
            <person name="Clermont O."/>
            <person name="Cruveiller S."/>
            <person name="Danchin A."/>
            <person name="Diard M."/>
            <person name="Dossat C."/>
            <person name="Karoui M.E."/>
            <person name="Frapy E."/>
            <person name="Garry L."/>
            <person name="Ghigo J.M."/>
            <person name="Gilles A.M."/>
            <person name="Johnson J."/>
            <person name="Le Bouguenec C."/>
            <person name="Lescat M."/>
            <person name="Mangenot S."/>
            <person name="Martinez-Jehanne V."/>
            <person name="Matic I."/>
            <person name="Nassif X."/>
            <person name="Oztas S."/>
            <person name="Petit M.A."/>
            <person name="Pichon C."/>
            <person name="Rouy Z."/>
            <person name="Ruf C.S."/>
            <person name="Schneider D."/>
            <person name="Tourret J."/>
            <person name="Vacherie B."/>
            <person name="Vallenet D."/>
            <person name="Medigue C."/>
            <person name="Rocha E.P.C."/>
            <person name="Denamur E."/>
        </authorList>
    </citation>
    <scope>NUCLEOTIDE SEQUENCE [LARGE SCALE GENOMIC DNA]</scope>
    <source>
        <strain>S88 / ExPEC</strain>
    </source>
</reference>
<gene>
    <name evidence="1" type="primary">aroE</name>
    <name type="ordered locus">ECS88_3669</name>
</gene>
<protein>
    <recommendedName>
        <fullName evidence="1">Shikimate dehydrogenase (NADP(+))</fullName>
        <shortName evidence="1">SDH</shortName>
        <ecNumber evidence="1">1.1.1.25</ecNumber>
    </recommendedName>
</protein>
<feature type="chain" id="PRO_1000118874" description="Shikimate dehydrogenase (NADP(+))">
    <location>
        <begin position="1"/>
        <end position="272"/>
    </location>
</feature>
<feature type="active site" description="Proton acceptor" evidence="1">
    <location>
        <position position="65"/>
    </location>
</feature>
<feature type="binding site" evidence="1">
    <location>
        <begin position="14"/>
        <end position="16"/>
    </location>
    <ligand>
        <name>shikimate</name>
        <dbReference type="ChEBI" id="CHEBI:36208"/>
    </ligand>
</feature>
<feature type="binding site" evidence="1">
    <location>
        <position position="61"/>
    </location>
    <ligand>
        <name>shikimate</name>
        <dbReference type="ChEBI" id="CHEBI:36208"/>
    </ligand>
</feature>
<feature type="binding site" evidence="1">
    <location>
        <position position="77"/>
    </location>
    <ligand>
        <name>NADP(+)</name>
        <dbReference type="ChEBI" id="CHEBI:58349"/>
    </ligand>
</feature>
<feature type="binding site" evidence="1">
    <location>
        <position position="86"/>
    </location>
    <ligand>
        <name>shikimate</name>
        <dbReference type="ChEBI" id="CHEBI:36208"/>
    </ligand>
</feature>
<feature type="binding site" evidence="1">
    <location>
        <position position="102"/>
    </location>
    <ligand>
        <name>shikimate</name>
        <dbReference type="ChEBI" id="CHEBI:36208"/>
    </ligand>
</feature>
<feature type="binding site" evidence="1">
    <location>
        <begin position="126"/>
        <end position="130"/>
    </location>
    <ligand>
        <name>NADP(+)</name>
        <dbReference type="ChEBI" id="CHEBI:58349"/>
    </ligand>
</feature>
<feature type="binding site" evidence="1">
    <location>
        <begin position="149"/>
        <end position="154"/>
    </location>
    <ligand>
        <name>NADP(+)</name>
        <dbReference type="ChEBI" id="CHEBI:58349"/>
    </ligand>
</feature>
<feature type="binding site" evidence="1">
    <location>
        <position position="213"/>
    </location>
    <ligand>
        <name>NADP(+)</name>
        <dbReference type="ChEBI" id="CHEBI:58349"/>
    </ligand>
</feature>
<feature type="binding site" evidence="1">
    <location>
        <position position="215"/>
    </location>
    <ligand>
        <name>shikimate</name>
        <dbReference type="ChEBI" id="CHEBI:36208"/>
    </ligand>
</feature>
<feature type="binding site" evidence="1">
    <location>
        <position position="237"/>
    </location>
    <ligand>
        <name>NADP(+)</name>
        <dbReference type="ChEBI" id="CHEBI:58349"/>
    </ligand>
</feature>
<evidence type="ECO:0000255" key="1">
    <source>
        <dbReference type="HAMAP-Rule" id="MF_00222"/>
    </source>
</evidence>
<organism>
    <name type="scientific">Escherichia coli O45:K1 (strain S88 / ExPEC)</name>
    <dbReference type="NCBI Taxonomy" id="585035"/>
    <lineage>
        <taxon>Bacteria</taxon>
        <taxon>Pseudomonadati</taxon>
        <taxon>Pseudomonadota</taxon>
        <taxon>Gammaproteobacteria</taxon>
        <taxon>Enterobacterales</taxon>
        <taxon>Enterobacteriaceae</taxon>
        <taxon>Escherichia</taxon>
    </lineage>
</organism>
<keyword id="KW-0028">Amino-acid biosynthesis</keyword>
<keyword id="KW-0057">Aromatic amino acid biosynthesis</keyword>
<keyword id="KW-0521">NADP</keyword>
<keyword id="KW-0560">Oxidoreductase</keyword>
<keyword id="KW-1185">Reference proteome</keyword>
<dbReference type="EC" id="1.1.1.25" evidence="1"/>
<dbReference type="EMBL" id="CU928161">
    <property type="protein sequence ID" value="CAR04886.1"/>
    <property type="molecule type" value="Genomic_DNA"/>
</dbReference>
<dbReference type="RefSeq" id="WP_000451230.1">
    <property type="nucleotide sequence ID" value="NC_011742.1"/>
</dbReference>
<dbReference type="SMR" id="B7MC45"/>
<dbReference type="KEGG" id="ecz:ECS88_3669"/>
<dbReference type="HOGENOM" id="CLU_044063_2_1_6"/>
<dbReference type="UniPathway" id="UPA00053">
    <property type="reaction ID" value="UER00087"/>
</dbReference>
<dbReference type="Proteomes" id="UP000000747">
    <property type="component" value="Chromosome"/>
</dbReference>
<dbReference type="GO" id="GO:0005829">
    <property type="term" value="C:cytosol"/>
    <property type="evidence" value="ECO:0007669"/>
    <property type="project" value="TreeGrafter"/>
</dbReference>
<dbReference type="GO" id="GO:0050661">
    <property type="term" value="F:NADP binding"/>
    <property type="evidence" value="ECO:0007669"/>
    <property type="project" value="InterPro"/>
</dbReference>
<dbReference type="GO" id="GO:0004764">
    <property type="term" value="F:shikimate 3-dehydrogenase (NADP+) activity"/>
    <property type="evidence" value="ECO:0007669"/>
    <property type="project" value="UniProtKB-UniRule"/>
</dbReference>
<dbReference type="GO" id="GO:0008652">
    <property type="term" value="P:amino acid biosynthetic process"/>
    <property type="evidence" value="ECO:0007669"/>
    <property type="project" value="UniProtKB-KW"/>
</dbReference>
<dbReference type="GO" id="GO:0009073">
    <property type="term" value="P:aromatic amino acid family biosynthetic process"/>
    <property type="evidence" value="ECO:0007669"/>
    <property type="project" value="UniProtKB-KW"/>
</dbReference>
<dbReference type="GO" id="GO:0009423">
    <property type="term" value="P:chorismate biosynthetic process"/>
    <property type="evidence" value="ECO:0007669"/>
    <property type="project" value="UniProtKB-UniRule"/>
</dbReference>
<dbReference type="GO" id="GO:0019632">
    <property type="term" value="P:shikimate metabolic process"/>
    <property type="evidence" value="ECO:0007669"/>
    <property type="project" value="InterPro"/>
</dbReference>
<dbReference type="CDD" id="cd01065">
    <property type="entry name" value="NAD_bind_Shikimate_DH"/>
    <property type="match status" value="1"/>
</dbReference>
<dbReference type="FunFam" id="3.40.50.10860:FF:000006">
    <property type="entry name" value="Shikimate dehydrogenase (NADP(+))"/>
    <property type="match status" value="1"/>
</dbReference>
<dbReference type="FunFam" id="3.40.50.720:FF:000104">
    <property type="entry name" value="Shikimate dehydrogenase (NADP(+))"/>
    <property type="match status" value="1"/>
</dbReference>
<dbReference type="Gene3D" id="3.40.50.10860">
    <property type="entry name" value="Leucine Dehydrogenase, chain A, domain 1"/>
    <property type="match status" value="1"/>
</dbReference>
<dbReference type="Gene3D" id="3.40.50.720">
    <property type="entry name" value="NAD(P)-binding Rossmann-like Domain"/>
    <property type="match status" value="1"/>
</dbReference>
<dbReference type="HAMAP" id="MF_00222">
    <property type="entry name" value="Shikimate_DH_AroE"/>
    <property type="match status" value="1"/>
</dbReference>
<dbReference type="InterPro" id="IPR046346">
    <property type="entry name" value="Aminoacid_DH-like_N_sf"/>
</dbReference>
<dbReference type="InterPro" id="IPR036291">
    <property type="entry name" value="NAD(P)-bd_dom_sf"/>
</dbReference>
<dbReference type="InterPro" id="IPR041121">
    <property type="entry name" value="SDH_C"/>
</dbReference>
<dbReference type="InterPro" id="IPR011342">
    <property type="entry name" value="Shikimate_DH"/>
</dbReference>
<dbReference type="InterPro" id="IPR013708">
    <property type="entry name" value="Shikimate_DH-bd_N"/>
</dbReference>
<dbReference type="InterPro" id="IPR022893">
    <property type="entry name" value="Shikimate_DH_fam"/>
</dbReference>
<dbReference type="InterPro" id="IPR006151">
    <property type="entry name" value="Shikm_DH/Glu-tRNA_Rdtase"/>
</dbReference>
<dbReference type="NCBIfam" id="TIGR00507">
    <property type="entry name" value="aroE"/>
    <property type="match status" value="1"/>
</dbReference>
<dbReference type="NCBIfam" id="NF001310">
    <property type="entry name" value="PRK00258.1-2"/>
    <property type="match status" value="1"/>
</dbReference>
<dbReference type="PANTHER" id="PTHR21089:SF1">
    <property type="entry name" value="BIFUNCTIONAL 3-DEHYDROQUINATE DEHYDRATASE_SHIKIMATE DEHYDROGENASE, CHLOROPLASTIC"/>
    <property type="match status" value="1"/>
</dbReference>
<dbReference type="PANTHER" id="PTHR21089">
    <property type="entry name" value="SHIKIMATE DEHYDROGENASE"/>
    <property type="match status" value="1"/>
</dbReference>
<dbReference type="Pfam" id="PF18317">
    <property type="entry name" value="SDH_C"/>
    <property type="match status" value="1"/>
</dbReference>
<dbReference type="Pfam" id="PF01488">
    <property type="entry name" value="Shikimate_DH"/>
    <property type="match status" value="1"/>
</dbReference>
<dbReference type="Pfam" id="PF08501">
    <property type="entry name" value="Shikimate_dh_N"/>
    <property type="match status" value="1"/>
</dbReference>
<dbReference type="SUPFAM" id="SSF53223">
    <property type="entry name" value="Aminoacid dehydrogenase-like, N-terminal domain"/>
    <property type="match status" value="1"/>
</dbReference>
<dbReference type="SUPFAM" id="SSF51735">
    <property type="entry name" value="NAD(P)-binding Rossmann-fold domains"/>
    <property type="match status" value="1"/>
</dbReference>
<sequence>METYAVFGNPIAHSKSPFIHQQFAQQLNIEHPYGRVLAPINDFINTLNAFFSAGGKGANVTVPFKEEAFARADELTERAALAGAVNTLKRLEDGRLLGDNTDGIGLLSDLERLSFIRPGLRILLIGAGGASRGVLLPLLSLDCAVTITNRTVSRAEELTKLFAHTGSIQALGMDELEGHEFDLIINATSSGISGDIPAIPSSLIHPGIYCYDMFYQKGKTPFLAWCEQRGSKRNADGLGMLVAQAAHAFLLWHGVLPDVEPVIKLLQQELSA</sequence>
<comment type="function">
    <text evidence="1">Involved in the biosynthesis of the chorismate, which leads to the biosynthesis of aromatic amino acids. Catalyzes the reversible NADPH linked reduction of 3-dehydroshikimate (DHSA) to yield shikimate (SA).</text>
</comment>
<comment type="catalytic activity">
    <reaction evidence="1">
        <text>shikimate + NADP(+) = 3-dehydroshikimate + NADPH + H(+)</text>
        <dbReference type="Rhea" id="RHEA:17737"/>
        <dbReference type="ChEBI" id="CHEBI:15378"/>
        <dbReference type="ChEBI" id="CHEBI:16630"/>
        <dbReference type="ChEBI" id="CHEBI:36208"/>
        <dbReference type="ChEBI" id="CHEBI:57783"/>
        <dbReference type="ChEBI" id="CHEBI:58349"/>
        <dbReference type="EC" id="1.1.1.25"/>
    </reaction>
</comment>
<comment type="pathway">
    <text evidence="1">Metabolic intermediate biosynthesis; chorismate biosynthesis; chorismate from D-erythrose 4-phosphate and phosphoenolpyruvate: step 4/7.</text>
</comment>
<comment type="subunit">
    <text evidence="1">Homodimer.</text>
</comment>
<comment type="similarity">
    <text evidence="1">Belongs to the shikimate dehydrogenase family.</text>
</comment>